<accession>Q65PA9</accession>
<accession>Q62ZP8</accession>
<reference key="1">
    <citation type="journal article" date="2004" name="J. Mol. Microbiol. Biotechnol.">
        <title>The complete genome sequence of Bacillus licheniformis DSM13, an organism with great industrial potential.</title>
        <authorList>
            <person name="Veith B."/>
            <person name="Herzberg C."/>
            <person name="Steckel S."/>
            <person name="Feesche J."/>
            <person name="Maurer K.H."/>
            <person name="Ehrenreich P."/>
            <person name="Baeumer S."/>
            <person name="Henne A."/>
            <person name="Liesegang H."/>
            <person name="Merkl R."/>
            <person name="Ehrenreich A."/>
            <person name="Gottschalk G."/>
        </authorList>
    </citation>
    <scope>NUCLEOTIDE SEQUENCE [LARGE SCALE GENOMIC DNA]</scope>
    <source>
        <strain>ATCC 14580 / DSM 13 / JCM 2505 / CCUG 7422 / NBRC 12200 / NCIMB 9375 / NCTC 10341 / NRRL NRS-1264 / Gibson 46</strain>
    </source>
</reference>
<reference key="2">
    <citation type="journal article" date="2004" name="Genome Biol.">
        <title>Complete genome sequence of the industrial bacterium Bacillus licheniformis and comparisons with closely related Bacillus species.</title>
        <authorList>
            <person name="Rey M.W."/>
            <person name="Ramaiya P."/>
            <person name="Nelson B.A."/>
            <person name="Brody-Karpin S.D."/>
            <person name="Zaretsky E.J."/>
            <person name="Tang M."/>
            <person name="Lopez de Leon A."/>
            <person name="Xiang H."/>
            <person name="Gusti V."/>
            <person name="Clausen I.G."/>
            <person name="Olsen P.B."/>
            <person name="Rasmussen M.D."/>
            <person name="Andersen J.T."/>
            <person name="Joergensen P.L."/>
            <person name="Larsen T.S."/>
            <person name="Sorokin A."/>
            <person name="Bolotin A."/>
            <person name="Lapidus A."/>
            <person name="Galleron N."/>
            <person name="Ehrlich S.D."/>
            <person name="Berka R.M."/>
        </authorList>
    </citation>
    <scope>NUCLEOTIDE SEQUENCE [LARGE SCALE GENOMIC DNA]</scope>
    <source>
        <strain>ATCC 14580 / DSM 13 / JCM 2505 / CCUG 7422 / NBRC 12200 / NCIMB 9375 / NCTC 10341 / NRRL NRS-1264 / Gibson 46</strain>
    </source>
</reference>
<name>EFTU_BACLD</name>
<evidence type="ECO:0000250" key="1"/>
<evidence type="ECO:0000255" key="2">
    <source>
        <dbReference type="HAMAP-Rule" id="MF_00118"/>
    </source>
</evidence>
<sequence>MAKEKFDRSKSHANIGTIGHVDHGKTTLTAAITTVLHKKSGKGTAMAYDQIDGAPEERERGITISTAHVEYETDNRHYAHVDCPGHADYVKNMITGAAQMDGAILVVSAADGPMPQTREHILLSRNVGVPYIVVFLNKCDMVDDEELLELVEMEVRDLLSEYEFPGDDVPVIKGSALKALEGDAQYEEKIFELMAAVDEYIPTPERETDKPFMMPVEDVFSITGRGTVATGRVERGQVKVGDEVEIIGLQEENKKTTVTGVEMFRKLLDYAEAGDNIGALLRGVSREEIQRGQVLAQPGTITPHKKFKAEVYVLSKEEGGRHTPFFSNYRPQFYFRTTDVTGIIQLPEGVEMVMPGDNIEMTVELISTIAIEDGTRFSIREGGRTVGSGVVSSIIE</sequence>
<proteinExistence type="inferred from homology"/>
<feature type="chain" id="PRO_1000015609" description="Elongation factor Tu">
    <location>
        <begin position="1"/>
        <end position="396"/>
    </location>
</feature>
<feature type="domain" description="tr-type G">
    <location>
        <begin position="10"/>
        <end position="205"/>
    </location>
</feature>
<feature type="region of interest" description="G1" evidence="1">
    <location>
        <begin position="19"/>
        <end position="26"/>
    </location>
</feature>
<feature type="region of interest" description="G2" evidence="1">
    <location>
        <begin position="61"/>
        <end position="65"/>
    </location>
</feature>
<feature type="region of interest" description="G3" evidence="1">
    <location>
        <begin position="82"/>
        <end position="85"/>
    </location>
</feature>
<feature type="region of interest" description="G4" evidence="1">
    <location>
        <begin position="137"/>
        <end position="140"/>
    </location>
</feature>
<feature type="region of interest" description="G5" evidence="1">
    <location>
        <begin position="175"/>
        <end position="177"/>
    </location>
</feature>
<feature type="binding site" evidence="2">
    <location>
        <begin position="19"/>
        <end position="26"/>
    </location>
    <ligand>
        <name>GTP</name>
        <dbReference type="ChEBI" id="CHEBI:37565"/>
    </ligand>
</feature>
<feature type="binding site" evidence="2">
    <location>
        <position position="26"/>
    </location>
    <ligand>
        <name>Mg(2+)</name>
        <dbReference type="ChEBI" id="CHEBI:18420"/>
    </ligand>
</feature>
<feature type="binding site" evidence="2">
    <location>
        <begin position="82"/>
        <end position="86"/>
    </location>
    <ligand>
        <name>GTP</name>
        <dbReference type="ChEBI" id="CHEBI:37565"/>
    </ligand>
</feature>
<feature type="binding site" evidence="2">
    <location>
        <begin position="137"/>
        <end position="140"/>
    </location>
    <ligand>
        <name>GTP</name>
        <dbReference type="ChEBI" id="CHEBI:37565"/>
    </ligand>
</feature>
<comment type="function">
    <text evidence="2">GTP hydrolase that promotes the GTP-dependent binding of aminoacyl-tRNA to the A-site of ribosomes during protein biosynthesis.</text>
</comment>
<comment type="catalytic activity">
    <reaction evidence="2">
        <text>GTP + H2O = GDP + phosphate + H(+)</text>
        <dbReference type="Rhea" id="RHEA:19669"/>
        <dbReference type="ChEBI" id="CHEBI:15377"/>
        <dbReference type="ChEBI" id="CHEBI:15378"/>
        <dbReference type="ChEBI" id="CHEBI:37565"/>
        <dbReference type="ChEBI" id="CHEBI:43474"/>
        <dbReference type="ChEBI" id="CHEBI:58189"/>
        <dbReference type="EC" id="3.6.5.3"/>
    </reaction>
    <physiologicalReaction direction="left-to-right" evidence="2">
        <dbReference type="Rhea" id="RHEA:19670"/>
    </physiologicalReaction>
</comment>
<comment type="subunit">
    <text evidence="2">Monomer.</text>
</comment>
<comment type="subcellular location">
    <subcellularLocation>
        <location evidence="2">Cytoplasm</location>
    </subcellularLocation>
</comment>
<comment type="similarity">
    <text evidence="2">Belongs to the TRAFAC class translation factor GTPase superfamily. Classic translation factor GTPase family. EF-Tu/EF-1A subfamily.</text>
</comment>
<dbReference type="EC" id="3.6.5.3" evidence="2"/>
<dbReference type="EMBL" id="CP000002">
    <property type="protein sequence ID" value="AAU21760.1"/>
    <property type="molecule type" value="Genomic_DNA"/>
</dbReference>
<dbReference type="EMBL" id="AE017333">
    <property type="protein sequence ID" value="AAU39105.1"/>
    <property type="molecule type" value="Genomic_DNA"/>
</dbReference>
<dbReference type="RefSeq" id="WP_003178321.1">
    <property type="nucleotide sequence ID" value="NC_006322.1"/>
</dbReference>
<dbReference type="SMR" id="Q65PA9"/>
<dbReference type="STRING" id="279010.BL01055"/>
<dbReference type="GeneID" id="92858905"/>
<dbReference type="KEGG" id="bld:BLi00131"/>
<dbReference type="KEGG" id="bli:BL01055"/>
<dbReference type="eggNOG" id="COG0050">
    <property type="taxonomic scope" value="Bacteria"/>
</dbReference>
<dbReference type="HOGENOM" id="CLU_007265_0_1_9"/>
<dbReference type="Proteomes" id="UP000000606">
    <property type="component" value="Chromosome"/>
</dbReference>
<dbReference type="GO" id="GO:0005829">
    <property type="term" value="C:cytosol"/>
    <property type="evidence" value="ECO:0007669"/>
    <property type="project" value="TreeGrafter"/>
</dbReference>
<dbReference type="GO" id="GO:0005525">
    <property type="term" value="F:GTP binding"/>
    <property type="evidence" value="ECO:0007669"/>
    <property type="project" value="UniProtKB-UniRule"/>
</dbReference>
<dbReference type="GO" id="GO:0003924">
    <property type="term" value="F:GTPase activity"/>
    <property type="evidence" value="ECO:0007669"/>
    <property type="project" value="InterPro"/>
</dbReference>
<dbReference type="GO" id="GO:0003746">
    <property type="term" value="F:translation elongation factor activity"/>
    <property type="evidence" value="ECO:0007669"/>
    <property type="project" value="UniProtKB-UniRule"/>
</dbReference>
<dbReference type="CDD" id="cd01884">
    <property type="entry name" value="EF_Tu"/>
    <property type="match status" value="1"/>
</dbReference>
<dbReference type="CDD" id="cd03697">
    <property type="entry name" value="EFTU_II"/>
    <property type="match status" value="1"/>
</dbReference>
<dbReference type="CDD" id="cd03707">
    <property type="entry name" value="EFTU_III"/>
    <property type="match status" value="1"/>
</dbReference>
<dbReference type="FunFam" id="2.40.30.10:FF:000001">
    <property type="entry name" value="Elongation factor Tu"/>
    <property type="match status" value="1"/>
</dbReference>
<dbReference type="FunFam" id="3.40.50.300:FF:000003">
    <property type="entry name" value="Elongation factor Tu"/>
    <property type="match status" value="1"/>
</dbReference>
<dbReference type="Gene3D" id="3.40.50.300">
    <property type="entry name" value="P-loop containing nucleotide triphosphate hydrolases"/>
    <property type="match status" value="1"/>
</dbReference>
<dbReference type="Gene3D" id="2.40.30.10">
    <property type="entry name" value="Translation factors"/>
    <property type="match status" value="2"/>
</dbReference>
<dbReference type="HAMAP" id="MF_00118_B">
    <property type="entry name" value="EF_Tu_B"/>
    <property type="match status" value="1"/>
</dbReference>
<dbReference type="InterPro" id="IPR041709">
    <property type="entry name" value="EF-Tu_GTP-bd"/>
</dbReference>
<dbReference type="InterPro" id="IPR050055">
    <property type="entry name" value="EF-Tu_GTPase"/>
</dbReference>
<dbReference type="InterPro" id="IPR004161">
    <property type="entry name" value="EFTu-like_2"/>
</dbReference>
<dbReference type="InterPro" id="IPR033720">
    <property type="entry name" value="EFTU_2"/>
</dbReference>
<dbReference type="InterPro" id="IPR031157">
    <property type="entry name" value="G_TR_CS"/>
</dbReference>
<dbReference type="InterPro" id="IPR027417">
    <property type="entry name" value="P-loop_NTPase"/>
</dbReference>
<dbReference type="InterPro" id="IPR005225">
    <property type="entry name" value="Small_GTP-bd"/>
</dbReference>
<dbReference type="InterPro" id="IPR000795">
    <property type="entry name" value="T_Tr_GTP-bd_dom"/>
</dbReference>
<dbReference type="InterPro" id="IPR009000">
    <property type="entry name" value="Transl_B-barrel_sf"/>
</dbReference>
<dbReference type="InterPro" id="IPR009001">
    <property type="entry name" value="Transl_elong_EF1A/Init_IF2_C"/>
</dbReference>
<dbReference type="InterPro" id="IPR004541">
    <property type="entry name" value="Transl_elong_EFTu/EF1A_bac/org"/>
</dbReference>
<dbReference type="InterPro" id="IPR004160">
    <property type="entry name" value="Transl_elong_EFTu/EF1A_C"/>
</dbReference>
<dbReference type="NCBIfam" id="TIGR00485">
    <property type="entry name" value="EF-Tu"/>
    <property type="match status" value="1"/>
</dbReference>
<dbReference type="NCBIfam" id="NF000766">
    <property type="entry name" value="PRK00049.1"/>
    <property type="match status" value="1"/>
</dbReference>
<dbReference type="NCBIfam" id="NF009372">
    <property type="entry name" value="PRK12735.1"/>
    <property type="match status" value="1"/>
</dbReference>
<dbReference type="NCBIfam" id="NF009373">
    <property type="entry name" value="PRK12736.1"/>
    <property type="match status" value="1"/>
</dbReference>
<dbReference type="NCBIfam" id="TIGR00231">
    <property type="entry name" value="small_GTP"/>
    <property type="match status" value="1"/>
</dbReference>
<dbReference type="PANTHER" id="PTHR43721:SF22">
    <property type="entry name" value="ELONGATION FACTOR TU, MITOCHONDRIAL"/>
    <property type="match status" value="1"/>
</dbReference>
<dbReference type="PANTHER" id="PTHR43721">
    <property type="entry name" value="ELONGATION FACTOR TU-RELATED"/>
    <property type="match status" value="1"/>
</dbReference>
<dbReference type="Pfam" id="PF00009">
    <property type="entry name" value="GTP_EFTU"/>
    <property type="match status" value="1"/>
</dbReference>
<dbReference type="Pfam" id="PF03144">
    <property type="entry name" value="GTP_EFTU_D2"/>
    <property type="match status" value="1"/>
</dbReference>
<dbReference type="Pfam" id="PF03143">
    <property type="entry name" value="GTP_EFTU_D3"/>
    <property type="match status" value="1"/>
</dbReference>
<dbReference type="PRINTS" id="PR00315">
    <property type="entry name" value="ELONGATNFCT"/>
</dbReference>
<dbReference type="SUPFAM" id="SSF50465">
    <property type="entry name" value="EF-Tu/eEF-1alpha/eIF2-gamma C-terminal domain"/>
    <property type="match status" value="1"/>
</dbReference>
<dbReference type="SUPFAM" id="SSF52540">
    <property type="entry name" value="P-loop containing nucleoside triphosphate hydrolases"/>
    <property type="match status" value="1"/>
</dbReference>
<dbReference type="SUPFAM" id="SSF50447">
    <property type="entry name" value="Translation proteins"/>
    <property type="match status" value="1"/>
</dbReference>
<dbReference type="PROSITE" id="PS00301">
    <property type="entry name" value="G_TR_1"/>
    <property type="match status" value="1"/>
</dbReference>
<dbReference type="PROSITE" id="PS51722">
    <property type="entry name" value="G_TR_2"/>
    <property type="match status" value="1"/>
</dbReference>
<protein>
    <recommendedName>
        <fullName evidence="2">Elongation factor Tu</fullName>
        <shortName evidence="2">EF-Tu</shortName>
        <ecNumber evidence="2">3.6.5.3</ecNumber>
    </recommendedName>
</protein>
<keyword id="KW-0963">Cytoplasm</keyword>
<keyword id="KW-0251">Elongation factor</keyword>
<keyword id="KW-0342">GTP-binding</keyword>
<keyword id="KW-0378">Hydrolase</keyword>
<keyword id="KW-0460">Magnesium</keyword>
<keyword id="KW-0479">Metal-binding</keyword>
<keyword id="KW-0547">Nucleotide-binding</keyword>
<keyword id="KW-0648">Protein biosynthesis</keyword>
<keyword id="KW-1185">Reference proteome</keyword>
<organism>
    <name type="scientific">Bacillus licheniformis (strain ATCC 14580 / DSM 13 / JCM 2505 / CCUG 7422 / NBRC 12200 / NCIMB 9375 / NCTC 10341 / NRRL NRS-1264 / Gibson 46)</name>
    <dbReference type="NCBI Taxonomy" id="279010"/>
    <lineage>
        <taxon>Bacteria</taxon>
        <taxon>Bacillati</taxon>
        <taxon>Bacillota</taxon>
        <taxon>Bacilli</taxon>
        <taxon>Bacillales</taxon>
        <taxon>Bacillaceae</taxon>
        <taxon>Bacillus</taxon>
    </lineage>
</organism>
<gene>
    <name evidence="2" type="primary">tuf</name>
    <name type="ordered locus">BLi00131</name>
    <name type="ordered locus">BL01055</name>
</gene>